<accession>A9LYA2</accession>
<keyword id="KW-0150">Chloroplast</keyword>
<keyword id="KW-0472">Membrane</keyword>
<keyword id="KW-0602">Photosynthesis</keyword>
<keyword id="KW-0934">Plastid</keyword>
<keyword id="KW-0677">Repeat</keyword>
<keyword id="KW-0793">Thylakoid</keyword>
<keyword id="KW-0802">TPR repeat</keyword>
<gene>
    <name evidence="1" type="primary">ycf3</name>
</gene>
<reference key="1">
    <citation type="submission" date="2007-11" db="EMBL/GenBank/DDBJ databases">
        <title>The complete chloroplast genome of Acorus americanus.</title>
        <authorList>
            <person name="Peery R.M."/>
            <person name="Chumley T.W."/>
            <person name="Kuehl J.V."/>
            <person name="Boore J.L."/>
            <person name="Raubeson L.A."/>
        </authorList>
    </citation>
    <scope>NUCLEOTIDE SEQUENCE [LARGE SCALE GENOMIC DNA]</scope>
</reference>
<proteinExistence type="inferred from homology"/>
<evidence type="ECO:0000255" key="1">
    <source>
        <dbReference type="HAMAP-Rule" id="MF_00439"/>
    </source>
</evidence>
<comment type="function">
    <text evidence="1">Essential for the assembly of the photosystem I (PSI) complex. May act as a chaperone-like factor to guide the assembly of the PSI subunits.</text>
</comment>
<comment type="subcellular location">
    <subcellularLocation>
        <location evidence="1">Plastid</location>
        <location evidence="1">Chloroplast thylakoid membrane</location>
        <topology evidence="1">Peripheral membrane protein</topology>
    </subcellularLocation>
</comment>
<comment type="similarity">
    <text evidence="1">Belongs to the Ycf3 family.</text>
</comment>
<name>YCF3_ACOCI</name>
<protein>
    <recommendedName>
        <fullName evidence="1">Photosystem I assembly protein Ycf3</fullName>
    </recommendedName>
</protein>
<dbReference type="EMBL" id="EU273602">
    <property type="protein sequence ID" value="ABX38745.1"/>
    <property type="molecule type" value="Genomic_DNA"/>
</dbReference>
<dbReference type="RefSeq" id="YP_001586183.1">
    <property type="nucleotide sequence ID" value="NC_010093.1"/>
</dbReference>
<dbReference type="SMR" id="A9LYA2"/>
<dbReference type="GeneID" id="5777819"/>
<dbReference type="GO" id="GO:0009535">
    <property type="term" value="C:chloroplast thylakoid membrane"/>
    <property type="evidence" value="ECO:0007669"/>
    <property type="project" value="UniProtKB-SubCell"/>
</dbReference>
<dbReference type="GO" id="GO:0015979">
    <property type="term" value="P:photosynthesis"/>
    <property type="evidence" value="ECO:0007669"/>
    <property type="project" value="UniProtKB-UniRule"/>
</dbReference>
<dbReference type="FunFam" id="1.25.40.10:FF:000004">
    <property type="entry name" value="Photosystem I assembly protein Ycf3"/>
    <property type="match status" value="1"/>
</dbReference>
<dbReference type="Gene3D" id="1.25.40.10">
    <property type="entry name" value="Tetratricopeptide repeat domain"/>
    <property type="match status" value="1"/>
</dbReference>
<dbReference type="HAMAP" id="MF_00439">
    <property type="entry name" value="Ycf3"/>
    <property type="match status" value="1"/>
</dbReference>
<dbReference type="InterPro" id="IPR022818">
    <property type="entry name" value="PSI_Ycf3_assembly"/>
</dbReference>
<dbReference type="InterPro" id="IPR011990">
    <property type="entry name" value="TPR-like_helical_dom_sf"/>
</dbReference>
<dbReference type="InterPro" id="IPR019734">
    <property type="entry name" value="TPR_rpt"/>
</dbReference>
<dbReference type="InterPro" id="IPR051685">
    <property type="entry name" value="Ycf3/AcsC/BcsC/TPR_MFPF"/>
</dbReference>
<dbReference type="NCBIfam" id="NF002725">
    <property type="entry name" value="PRK02603.1"/>
    <property type="match status" value="1"/>
</dbReference>
<dbReference type="PANTHER" id="PTHR44943">
    <property type="entry name" value="CELLULOSE SYNTHASE OPERON PROTEIN C"/>
    <property type="match status" value="1"/>
</dbReference>
<dbReference type="PANTHER" id="PTHR44943:SF8">
    <property type="entry name" value="TPR REPEAT-CONTAINING PROTEIN MJ0263"/>
    <property type="match status" value="1"/>
</dbReference>
<dbReference type="Pfam" id="PF00515">
    <property type="entry name" value="TPR_1"/>
    <property type="match status" value="1"/>
</dbReference>
<dbReference type="SMART" id="SM00028">
    <property type="entry name" value="TPR"/>
    <property type="match status" value="3"/>
</dbReference>
<dbReference type="SUPFAM" id="SSF48452">
    <property type="entry name" value="TPR-like"/>
    <property type="match status" value="1"/>
</dbReference>
<dbReference type="PROSITE" id="PS50005">
    <property type="entry name" value="TPR"/>
    <property type="match status" value="3"/>
</dbReference>
<dbReference type="PROSITE" id="PS50293">
    <property type="entry name" value="TPR_REGION"/>
    <property type="match status" value="1"/>
</dbReference>
<organism>
    <name type="scientific">Acorus calamus var. americanus</name>
    <name type="common">American sweet flag</name>
    <name type="synonym">Acorus americanus</name>
    <dbReference type="NCBI Taxonomy" id="263995"/>
    <lineage>
        <taxon>Eukaryota</taxon>
        <taxon>Viridiplantae</taxon>
        <taxon>Streptophyta</taxon>
        <taxon>Embryophyta</taxon>
        <taxon>Tracheophyta</taxon>
        <taxon>Spermatophyta</taxon>
        <taxon>Magnoliopsida</taxon>
        <taxon>Liliopsida</taxon>
        <taxon>Acoraceae</taxon>
        <taxon>Acorus</taxon>
    </lineage>
</organism>
<feature type="chain" id="PRO_0000325049" description="Photosystem I assembly protein Ycf3">
    <location>
        <begin position="1"/>
        <end position="168"/>
    </location>
</feature>
<feature type="repeat" description="TPR 1">
    <location>
        <begin position="35"/>
        <end position="68"/>
    </location>
</feature>
<feature type="repeat" description="TPR 2">
    <location>
        <begin position="72"/>
        <end position="105"/>
    </location>
</feature>
<feature type="repeat" description="TPR 3">
    <location>
        <begin position="120"/>
        <end position="153"/>
    </location>
</feature>
<sequence length="168" mass="19448">MPRSRINANFIDKTSTIVANILLRIIPTTSGEKEAFTYYRDGMSAQSEGNYAEALQNYYEATRPEIDPYDRSYILYNIGLIHTSNGEHTKALEYYFRALERNPFLPQAFNNMAVICHYRGEQAIRQGDSEIAEAWSDQAAEYWKQAIALTPGNYIEAQNWLKITRRFE</sequence>
<geneLocation type="chloroplast"/>